<sequence>MRLLLIHSDHIEYEARKKTKVAEEDAVQKDALDEALAVFCAVESVDEENIEDAVRQAADEIVATARQLGTTNIMIYPYAHLSSDLASPGAAVSVLKGIEGALVGTDGFVVKRAPFGWYKAFSLSCKGHPLSELSRTILPGEGAAAPKKEIEHEFFVITPEGDRKNAADYAKEETPFAALIRKELGYPGPEGAEPVHVDLMRAKELVEYEPRADVGNHRWMPRGKLIRDLLSDYVLTQVLDYGGMPVETPVMYDLGDAAIAEHAAKFGERQYRFKSGNRDMMLRFAACFGMFSIMHDMHISPNTLPMKLYELSTYSFRHEQKGEVIGLKRLRAFTMPDMHTLCRDMDGALTAFEEQLAIGWKTGEDLETPLVGVFRCTRDFFEQYELWVKGIVAKSGVPMLIEVLSERTHYWIAKVDLAAIDAQGRPIENPTVQIDVESADRFDIKYYAPDGTEVHPPILHCSPTGSIERVICAMLEGTAAQEVPSFPTWLAPTQVRLVPVAERHICFAEEIDTRLNAAGIRADVDDRDESVNKKIREAGMDWVPYVAVIGDQEAETGRLMVTIRKLSEKKKPFKESMTESELVQAVKLETAGKPFRPLYTPRLLSRKPRFI</sequence>
<proteinExistence type="inferred from homology"/>
<protein>
    <recommendedName>
        <fullName evidence="1">Threonine--tRNA ligase</fullName>
        <ecNumber evidence="1">6.1.1.3</ecNumber>
    </recommendedName>
    <alternativeName>
        <fullName evidence="1">Threonyl-tRNA synthetase</fullName>
        <shortName evidence="1">ThrRS</shortName>
    </alternativeName>
</protein>
<feature type="chain" id="PRO_1000020432" description="Threonine--tRNA ligase">
    <location>
        <begin position="1"/>
        <end position="611"/>
    </location>
</feature>
<feature type="region of interest" description="Editing domain" evidence="1">
    <location>
        <begin position="1"/>
        <end position="145"/>
    </location>
</feature>
<feature type="region of interest" description="Catalytic" evidence="1">
    <location>
        <begin position="195"/>
        <end position="487"/>
    </location>
</feature>
<feature type="binding site" evidence="1">
    <location>
        <position position="287"/>
    </location>
    <ligand>
        <name>Zn(2+)</name>
        <dbReference type="ChEBI" id="CHEBI:29105"/>
    </ligand>
</feature>
<feature type="binding site" evidence="1">
    <location>
        <position position="339"/>
    </location>
    <ligand>
        <name>Zn(2+)</name>
        <dbReference type="ChEBI" id="CHEBI:29105"/>
    </ligand>
</feature>
<feature type="binding site" evidence="1">
    <location>
        <position position="460"/>
    </location>
    <ligand>
        <name>Zn(2+)</name>
        <dbReference type="ChEBI" id="CHEBI:29105"/>
    </ligand>
</feature>
<keyword id="KW-0030">Aminoacyl-tRNA synthetase</keyword>
<keyword id="KW-0067">ATP-binding</keyword>
<keyword id="KW-0963">Cytoplasm</keyword>
<keyword id="KW-0436">Ligase</keyword>
<keyword id="KW-0479">Metal-binding</keyword>
<keyword id="KW-0547">Nucleotide-binding</keyword>
<keyword id="KW-0648">Protein biosynthesis</keyword>
<keyword id="KW-0694">RNA-binding</keyword>
<keyword id="KW-0820">tRNA-binding</keyword>
<keyword id="KW-0862">Zinc</keyword>
<accession>A3CTJ9</accession>
<evidence type="ECO:0000255" key="1">
    <source>
        <dbReference type="HAMAP-Rule" id="MF_00184"/>
    </source>
</evidence>
<name>SYT_METMJ</name>
<reference key="1">
    <citation type="journal article" date="2009" name="Stand. Genomic Sci.">
        <title>Complete genome sequence of Methanoculleus marisnigri Romesser et al. 1981 type strain JR1.</title>
        <authorList>
            <person name="Anderson I.J."/>
            <person name="Sieprawska-Lupa M."/>
            <person name="Lapidus A."/>
            <person name="Nolan M."/>
            <person name="Copeland A."/>
            <person name="Glavina Del Rio T."/>
            <person name="Tice H."/>
            <person name="Dalin E."/>
            <person name="Barry K."/>
            <person name="Saunders E."/>
            <person name="Han C."/>
            <person name="Brettin T."/>
            <person name="Detter J.C."/>
            <person name="Bruce D."/>
            <person name="Mikhailova N."/>
            <person name="Pitluck S."/>
            <person name="Hauser L."/>
            <person name="Land M."/>
            <person name="Lucas S."/>
            <person name="Richardson P."/>
            <person name="Whitman W.B."/>
            <person name="Kyrpides N.C."/>
        </authorList>
    </citation>
    <scope>NUCLEOTIDE SEQUENCE [LARGE SCALE GENOMIC DNA]</scope>
    <source>
        <strain>ATCC 35101 / DSM 1498 / JR1</strain>
    </source>
</reference>
<gene>
    <name evidence="1" type="primary">thrS</name>
    <name type="ordered locus">Memar_0766</name>
</gene>
<organism>
    <name type="scientific">Methanoculleus marisnigri (strain ATCC 35101 / DSM 1498 / JR1)</name>
    <dbReference type="NCBI Taxonomy" id="368407"/>
    <lineage>
        <taxon>Archaea</taxon>
        <taxon>Methanobacteriati</taxon>
        <taxon>Methanobacteriota</taxon>
        <taxon>Stenosarchaea group</taxon>
        <taxon>Methanomicrobia</taxon>
        <taxon>Methanomicrobiales</taxon>
        <taxon>Methanomicrobiaceae</taxon>
        <taxon>Methanoculleus</taxon>
    </lineage>
</organism>
<dbReference type="EC" id="6.1.1.3" evidence="1"/>
<dbReference type="EMBL" id="CP000562">
    <property type="protein sequence ID" value="ABN56699.1"/>
    <property type="molecule type" value="Genomic_DNA"/>
</dbReference>
<dbReference type="RefSeq" id="WP_011843610.1">
    <property type="nucleotide sequence ID" value="NC_009051.1"/>
</dbReference>
<dbReference type="SMR" id="A3CTJ9"/>
<dbReference type="STRING" id="368407.Memar_0766"/>
<dbReference type="GeneID" id="4846915"/>
<dbReference type="KEGG" id="mem:Memar_0766"/>
<dbReference type="eggNOG" id="arCOG00401">
    <property type="taxonomic scope" value="Archaea"/>
</dbReference>
<dbReference type="HOGENOM" id="CLU_029833_0_0_2"/>
<dbReference type="OrthoDB" id="372136at2157"/>
<dbReference type="Proteomes" id="UP000002146">
    <property type="component" value="Chromosome"/>
</dbReference>
<dbReference type="GO" id="GO:0005737">
    <property type="term" value="C:cytoplasm"/>
    <property type="evidence" value="ECO:0007669"/>
    <property type="project" value="UniProtKB-SubCell"/>
</dbReference>
<dbReference type="GO" id="GO:0005524">
    <property type="term" value="F:ATP binding"/>
    <property type="evidence" value="ECO:0007669"/>
    <property type="project" value="UniProtKB-UniRule"/>
</dbReference>
<dbReference type="GO" id="GO:0004829">
    <property type="term" value="F:threonine-tRNA ligase activity"/>
    <property type="evidence" value="ECO:0007669"/>
    <property type="project" value="UniProtKB-UniRule"/>
</dbReference>
<dbReference type="GO" id="GO:0000049">
    <property type="term" value="F:tRNA binding"/>
    <property type="evidence" value="ECO:0007669"/>
    <property type="project" value="UniProtKB-KW"/>
</dbReference>
<dbReference type="GO" id="GO:0008270">
    <property type="term" value="F:zinc ion binding"/>
    <property type="evidence" value="ECO:0007669"/>
    <property type="project" value="InterPro"/>
</dbReference>
<dbReference type="GO" id="GO:0006435">
    <property type="term" value="P:threonyl-tRNA aminoacylation"/>
    <property type="evidence" value="ECO:0007669"/>
    <property type="project" value="UniProtKB-UniRule"/>
</dbReference>
<dbReference type="CDD" id="cd00860">
    <property type="entry name" value="ThrRS_anticodon"/>
    <property type="match status" value="1"/>
</dbReference>
<dbReference type="FunFam" id="3.40.50.800:FF:000001">
    <property type="entry name" value="Threonine--tRNA ligase"/>
    <property type="match status" value="1"/>
</dbReference>
<dbReference type="FunFam" id="3.50.80.10:FF:000004">
    <property type="entry name" value="Threonine--tRNA ligase"/>
    <property type="match status" value="1"/>
</dbReference>
<dbReference type="Gene3D" id="3.40.50.800">
    <property type="entry name" value="Anticodon-binding domain"/>
    <property type="match status" value="1"/>
</dbReference>
<dbReference type="Gene3D" id="3.30.930.10">
    <property type="entry name" value="Bira Bifunctional Protein, Domain 2"/>
    <property type="match status" value="1"/>
</dbReference>
<dbReference type="Gene3D" id="3.50.80.10">
    <property type="entry name" value="D-tyrosyl-tRNA(Tyr) deacylase"/>
    <property type="match status" value="1"/>
</dbReference>
<dbReference type="HAMAP" id="MF_00184">
    <property type="entry name" value="Thr_tRNA_synth"/>
    <property type="match status" value="1"/>
</dbReference>
<dbReference type="InterPro" id="IPR002314">
    <property type="entry name" value="aa-tRNA-synt_IIb"/>
</dbReference>
<dbReference type="InterPro" id="IPR006195">
    <property type="entry name" value="aa-tRNA-synth_II"/>
</dbReference>
<dbReference type="InterPro" id="IPR045864">
    <property type="entry name" value="aa-tRNA-synth_II/BPL/LPL"/>
</dbReference>
<dbReference type="InterPro" id="IPR004154">
    <property type="entry name" value="Anticodon-bd"/>
</dbReference>
<dbReference type="InterPro" id="IPR036621">
    <property type="entry name" value="Anticodon-bd_dom_sf"/>
</dbReference>
<dbReference type="InterPro" id="IPR023509">
    <property type="entry name" value="DTD-like_sf"/>
</dbReference>
<dbReference type="InterPro" id="IPR002320">
    <property type="entry name" value="Thr-tRNA-ligase_IIa"/>
</dbReference>
<dbReference type="InterPro" id="IPR015011">
    <property type="entry name" value="Threonyl-tRNA_syn_edit_dom_arc"/>
</dbReference>
<dbReference type="InterPro" id="IPR047246">
    <property type="entry name" value="ThrRS_anticodon"/>
</dbReference>
<dbReference type="NCBIfam" id="NF003068">
    <property type="entry name" value="PRK03991.1"/>
    <property type="match status" value="1"/>
</dbReference>
<dbReference type="NCBIfam" id="TIGR00418">
    <property type="entry name" value="thrS"/>
    <property type="match status" value="1"/>
</dbReference>
<dbReference type="PANTHER" id="PTHR11451:SF44">
    <property type="entry name" value="THREONINE--TRNA LIGASE, CHLOROPLASTIC_MITOCHONDRIAL 2"/>
    <property type="match status" value="1"/>
</dbReference>
<dbReference type="PANTHER" id="PTHR11451">
    <property type="entry name" value="THREONINE-TRNA LIGASE"/>
    <property type="match status" value="1"/>
</dbReference>
<dbReference type="Pfam" id="PF03129">
    <property type="entry name" value="HGTP_anticodon"/>
    <property type="match status" value="1"/>
</dbReference>
<dbReference type="Pfam" id="PF00587">
    <property type="entry name" value="tRNA-synt_2b"/>
    <property type="match status" value="1"/>
</dbReference>
<dbReference type="Pfam" id="PF08915">
    <property type="entry name" value="tRNA-Thr_ED"/>
    <property type="match status" value="1"/>
</dbReference>
<dbReference type="PRINTS" id="PR01047">
    <property type="entry name" value="TRNASYNTHTHR"/>
</dbReference>
<dbReference type="SUPFAM" id="SSF52954">
    <property type="entry name" value="Class II aaRS ABD-related"/>
    <property type="match status" value="1"/>
</dbReference>
<dbReference type="SUPFAM" id="SSF55681">
    <property type="entry name" value="Class II aaRS and biotin synthetases"/>
    <property type="match status" value="1"/>
</dbReference>
<dbReference type="PROSITE" id="PS50862">
    <property type="entry name" value="AA_TRNA_LIGASE_II"/>
    <property type="match status" value="1"/>
</dbReference>
<comment type="function">
    <text evidence="1">Catalyzes the attachment of threonine to tRNA(Thr) in a two-step reaction: L-threonine is first activated by ATP to form Thr-AMP and then transferred to the acceptor end of tRNA(Thr). Also edits incorrectly charged L-seryl-tRNA(Thr).</text>
</comment>
<comment type="catalytic activity">
    <reaction evidence="1">
        <text>tRNA(Thr) + L-threonine + ATP = L-threonyl-tRNA(Thr) + AMP + diphosphate + H(+)</text>
        <dbReference type="Rhea" id="RHEA:24624"/>
        <dbReference type="Rhea" id="RHEA-COMP:9670"/>
        <dbReference type="Rhea" id="RHEA-COMP:9704"/>
        <dbReference type="ChEBI" id="CHEBI:15378"/>
        <dbReference type="ChEBI" id="CHEBI:30616"/>
        <dbReference type="ChEBI" id="CHEBI:33019"/>
        <dbReference type="ChEBI" id="CHEBI:57926"/>
        <dbReference type="ChEBI" id="CHEBI:78442"/>
        <dbReference type="ChEBI" id="CHEBI:78534"/>
        <dbReference type="ChEBI" id="CHEBI:456215"/>
        <dbReference type="EC" id="6.1.1.3"/>
    </reaction>
</comment>
<comment type="cofactor">
    <cofactor evidence="1">
        <name>Zn(2+)</name>
        <dbReference type="ChEBI" id="CHEBI:29105"/>
    </cofactor>
    <text evidence="1">Binds 1 zinc ion per subunit.</text>
</comment>
<comment type="subunit">
    <text evidence="1">Homodimer.</text>
</comment>
<comment type="subcellular location">
    <subcellularLocation>
        <location evidence="1">Cytoplasm</location>
    </subcellularLocation>
</comment>
<comment type="domain">
    <text evidence="1">The N-terminal domain is an archaea-specific tRNA-editing domain that hydrolyzes incorrectly charged L-seryl-tRNA(Thr). Catalysis of tRNA editing is performed by the charged tRNA itself.</text>
</comment>
<comment type="similarity">
    <text evidence="1">Belongs to the class-II aminoacyl-tRNA synthetase family.</text>
</comment>